<comment type="function">
    <text evidence="1">Methylates ribosomal protein L11.</text>
</comment>
<comment type="catalytic activity">
    <reaction evidence="1">
        <text>L-lysyl-[protein] + 3 S-adenosyl-L-methionine = N(6),N(6),N(6)-trimethyl-L-lysyl-[protein] + 3 S-adenosyl-L-homocysteine + 3 H(+)</text>
        <dbReference type="Rhea" id="RHEA:54192"/>
        <dbReference type="Rhea" id="RHEA-COMP:9752"/>
        <dbReference type="Rhea" id="RHEA-COMP:13826"/>
        <dbReference type="ChEBI" id="CHEBI:15378"/>
        <dbReference type="ChEBI" id="CHEBI:29969"/>
        <dbReference type="ChEBI" id="CHEBI:57856"/>
        <dbReference type="ChEBI" id="CHEBI:59789"/>
        <dbReference type="ChEBI" id="CHEBI:61961"/>
    </reaction>
</comment>
<comment type="subcellular location">
    <subcellularLocation>
        <location evidence="1">Cytoplasm</location>
    </subcellularLocation>
</comment>
<comment type="similarity">
    <text evidence="1">Belongs to the methyltransferase superfamily. PrmA family.</text>
</comment>
<sequence length="292" mass="32172">MAWLQLRINTSSEYAESVGDMLSANGSQAVTYVDAKDTPMYEPKPGEIMLWPDTQVVGLFEADADMKSILQRLGKAKVLGPDFKYKLEPLEDKDWEREWMDNFHPMQFGERLWICPSWRDVPDPDAVNVMLDPGLAFGTGTHPTTALCLRWLDGIDMAGKTVVDFGCGSGILALAALKLGAERVVGVDIDPQALQATKENARRNGVEDRLDVYLPQDQPELEADVVMANILSGPLLELQSVITNYCKSKGLLVLSGILAEQVSKIEDAYSQDIVLEPSAIDGEWARVSGSKR</sequence>
<feature type="chain" id="PRO_1000192574" description="Ribosomal protein L11 methyltransferase">
    <location>
        <begin position="1"/>
        <end position="292"/>
    </location>
</feature>
<feature type="binding site" evidence="1">
    <location>
        <position position="145"/>
    </location>
    <ligand>
        <name>S-adenosyl-L-methionine</name>
        <dbReference type="ChEBI" id="CHEBI:59789"/>
    </ligand>
</feature>
<feature type="binding site" evidence="1">
    <location>
        <position position="166"/>
    </location>
    <ligand>
        <name>S-adenosyl-L-methionine</name>
        <dbReference type="ChEBI" id="CHEBI:59789"/>
    </ligand>
</feature>
<feature type="binding site" evidence="1">
    <location>
        <position position="188"/>
    </location>
    <ligand>
        <name>S-adenosyl-L-methionine</name>
        <dbReference type="ChEBI" id="CHEBI:59789"/>
    </ligand>
</feature>
<feature type="binding site" evidence="1">
    <location>
        <position position="229"/>
    </location>
    <ligand>
        <name>S-adenosyl-L-methionine</name>
        <dbReference type="ChEBI" id="CHEBI:59789"/>
    </ligand>
</feature>
<name>PRMA_ALTMD</name>
<keyword id="KW-0963">Cytoplasm</keyword>
<keyword id="KW-0489">Methyltransferase</keyword>
<keyword id="KW-0949">S-adenosyl-L-methionine</keyword>
<keyword id="KW-0808">Transferase</keyword>
<accession>B4S130</accession>
<accession>F2GBJ1</accession>
<reference key="1">
    <citation type="journal article" date="2008" name="ISME J.">
        <title>Comparative genomics of two ecotypes of the marine planktonic copiotroph Alteromonas macleodii suggests alternative lifestyles associated with different kinds of particulate organic matter.</title>
        <authorList>
            <person name="Ivars-Martinez E."/>
            <person name="Martin-Cuadrado A.-B."/>
            <person name="D'Auria G."/>
            <person name="Mira A."/>
            <person name="Ferriera S."/>
            <person name="Johnson J."/>
            <person name="Friedman R."/>
            <person name="Rodriguez-Valera F."/>
        </authorList>
    </citation>
    <scope>NUCLEOTIDE SEQUENCE [LARGE SCALE GENOMIC DNA]</scope>
    <source>
        <strain>DSM 17117 / CIP 110805 / LMG 28347 / Deep ecotype</strain>
    </source>
</reference>
<gene>
    <name evidence="1" type="primary">prmA</name>
    <name type="ordered locus">MADE_1019725</name>
</gene>
<dbReference type="EC" id="2.1.1.-" evidence="1"/>
<dbReference type="EMBL" id="CP001103">
    <property type="protein sequence ID" value="AEB00068.1"/>
    <property type="molecule type" value="Genomic_DNA"/>
</dbReference>
<dbReference type="RefSeq" id="WP_012520107.1">
    <property type="nucleotide sequence ID" value="NC_011138.3"/>
</dbReference>
<dbReference type="SMR" id="B4S130"/>
<dbReference type="KEGG" id="amc:MADE_1019725"/>
<dbReference type="HOGENOM" id="CLU_049382_4_1_6"/>
<dbReference type="Proteomes" id="UP000001870">
    <property type="component" value="Chromosome"/>
</dbReference>
<dbReference type="GO" id="GO:0005829">
    <property type="term" value="C:cytosol"/>
    <property type="evidence" value="ECO:0007669"/>
    <property type="project" value="TreeGrafter"/>
</dbReference>
<dbReference type="GO" id="GO:0016279">
    <property type="term" value="F:protein-lysine N-methyltransferase activity"/>
    <property type="evidence" value="ECO:0007669"/>
    <property type="project" value="TreeGrafter"/>
</dbReference>
<dbReference type="GO" id="GO:0032259">
    <property type="term" value="P:methylation"/>
    <property type="evidence" value="ECO:0007669"/>
    <property type="project" value="UniProtKB-KW"/>
</dbReference>
<dbReference type="CDD" id="cd02440">
    <property type="entry name" value="AdoMet_MTases"/>
    <property type="match status" value="1"/>
</dbReference>
<dbReference type="Gene3D" id="3.40.50.150">
    <property type="entry name" value="Vaccinia Virus protein VP39"/>
    <property type="match status" value="1"/>
</dbReference>
<dbReference type="HAMAP" id="MF_00735">
    <property type="entry name" value="Methyltr_PrmA"/>
    <property type="match status" value="1"/>
</dbReference>
<dbReference type="InterPro" id="IPR050078">
    <property type="entry name" value="Ribosomal_L11_MeTrfase_PrmA"/>
</dbReference>
<dbReference type="InterPro" id="IPR004498">
    <property type="entry name" value="Ribosomal_PrmA_MeTrfase"/>
</dbReference>
<dbReference type="InterPro" id="IPR029063">
    <property type="entry name" value="SAM-dependent_MTases_sf"/>
</dbReference>
<dbReference type="NCBIfam" id="TIGR00406">
    <property type="entry name" value="prmA"/>
    <property type="match status" value="1"/>
</dbReference>
<dbReference type="PANTHER" id="PTHR43648">
    <property type="entry name" value="ELECTRON TRANSFER FLAVOPROTEIN BETA SUBUNIT LYSINE METHYLTRANSFERASE"/>
    <property type="match status" value="1"/>
</dbReference>
<dbReference type="PANTHER" id="PTHR43648:SF1">
    <property type="entry name" value="ELECTRON TRANSFER FLAVOPROTEIN BETA SUBUNIT LYSINE METHYLTRANSFERASE"/>
    <property type="match status" value="1"/>
</dbReference>
<dbReference type="Pfam" id="PF06325">
    <property type="entry name" value="PrmA"/>
    <property type="match status" value="1"/>
</dbReference>
<dbReference type="PIRSF" id="PIRSF000401">
    <property type="entry name" value="RPL11_MTase"/>
    <property type="match status" value="1"/>
</dbReference>
<dbReference type="SUPFAM" id="SSF53335">
    <property type="entry name" value="S-adenosyl-L-methionine-dependent methyltransferases"/>
    <property type="match status" value="1"/>
</dbReference>
<evidence type="ECO:0000255" key="1">
    <source>
        <dbReference type="HAMAP-Rule" id="MF_00735"/>
    </source>
</evidence>
<protein>
    <recommendedName>
        <fullName evidence="1">Ribosomal protein L11 methyltransferase</fullName>
        <shortName evidence="1">L11 Mtase</shortName>
        <ecNumber evidence="1">2.1.1.-</ecNumber>
    </recommendedName>
</protein>
<proteinExistence type="inferred from homology"/>
<organism>
    <name type="scientific">Alteromonas mediterranea (strain DSM 17117 / CIP 110805 / LMG 28347 / Deep ecotype)</name>
    <dbReference type="NCBI Taxonomy" id="1774373"/>
    <lineage>
        <taxon>Bacteria</taxon>
        <taxon>Pseudomonadati</taxon>
        <taxon>Pseudomonadota</taxon>
        <taxon>Gammaproteobacteria</taxon>
        <taxon>Alteromonadales</taxon>
        <taxon>Alteromonadaceae</taxon>
        <taxon>Alteromonas/Salinimonas group</taxon>
        <taxon>Alteromonas</taxon>
    </lineage>
</organism>